<protein>
    <recommendedName>
        <fullName evidence="1">Sulfurtransferase TusD</fullName>
        <ecNumber evidence="1">2.8.1.-</ecNumber>
    </recommendedName>
    <alternativeName>
        <fullName evidence="1">tRNA 2-thiouridine synthesizing protein D</fullName>
    </alternativeName>
</protein>
<name>TUSD_YERPB</name>
<accession>B2K5P0</accession>
<comment type="function">
    <text evidence="1">Part of a sulfur-relay system required for 2-thiolation of 5-methylaminomethyl-2-thiouridine (mnm(5)s(2)U) at tRNA wobble positions. Accepts sulfur from TusA and transfers it in turn to TusE.</text>
</comment>
<comment type="subunit">
    <text evidence="1">Heterohexamer, formed by a dimer of trimers. The hexameric TusBCD complex contains 2 copies each of TusB, TusC and TusD. The TusBCD complex interacts with TusE.</text>
</comment>
<comment type="subcellular location">
    <subcellularLocation>
        <location evidence="1">Cytoplasm</location>
    </subcellularLocation>
</comment>
<comment type="similarity">
    <text evidence="1">Belongs to the DsrE/TusD family.</text>
</comment>
<sequence length="131" mass="13959">MSALKYCLLVTGPAYGTQQASSAYQFAQAVVGAGHHLVSIFFYREGVLNANQLTAPASDEFDLVRAWQQLAAEQAVTLNVCVAAALRRGITDQHEAEQLNLAAANLQPGFTLSGLGALAEATLTCDRMVQF</sequence>
<keyword id="KW-0963">Cytoplasm</keyword>
<keyword id="KW-0808">Transferase</keyword>
<keyword id="KW-0819">tRNA processing</keyword>
<dbReference type="EC" id="2.8.1.-" evidence="1"/>
<dbReference type="EMBL" id="CP001048">
    <property type="protein sequence ID" value="ACC90849.1"/>
    <property type="molecule type" value="Genomic_DNA"/>
</dbReference>
<dbReference type="RefSeq" id="WP_002212320.1">
    <property type="nucleotide sequence ID" value="NZ_CP009780.1"/>
</dbReference>
<dbReference type="SMR" id="B2K5P0"/>
<dbReference type="GeneID" id="57974406"/>
<dbReference type="KEGG" id="ypb:YPTS_3900"/>
<dbReference type="PATRIC" id="fig|502801.10.peg.3365"/>
<dbReference type="GO" id="GO:1990228">
    <property type="term" value="C:sulfurtransferase complex"/>
    <property type="evidence" value="ECO:0007669"/>
    <property type="project" value="TreeGrafter"/>
</dbReference>
<dbReference type="GO" id="GO:0097163">
    <property type="term" value="F:sulfur carrier activity"/>
    <property type="evidence" value="ECO:0007669"/>
    <property type="project" value="TreeGrafter"/>
</dbReference>
<dbReference type="GO" id="GO:0016783">
    <property type="term" value="F:sulfurtransferase activity"/>
    <property type="evidence" value="ECO:0007669"/>
    <property type="project" value="UniProtKB-UniRule"/>
</dbReference>
<dbReference type="GO" id="GO:0002143">
    <property type="term" value="P:tRNA wobble position uridine thiolation"/>
    <property type="evidence" value="ECO:0007669"/>
    <property type="project" value="TreeGrafter"/>
</dbReference>
<dbReference type="FunFam" id="3.40.1260.10:FF:000001">
    <property type="entry name" value="Sulfurtransferase TusD"/>
    <property type="match status" value="1"/>
</dbReference>
<dbReference type="Gene3D" id="3.40.1260.10">
    <property type="entry name" value="DsrEFH-like"/>
    <property type="match status" value="1"/>
</dbReference>
<dbReference type="HAMAP" id="MF_00390">
    <property type="entry name" value="Thiourid_synth_D"/>
    <property type="match status" value="1"/>
</dbReference>
<dbReference type="InterPro" id="IPR027396">
    <property type="entry name" value="DsrEFH-like"/>
</dbReference>
<dbReference type="InterPro" id="IPR003787">
    <property type="entry name" value="Sulphur_relay_DsrE/F-like"/>
</dbReference>
<dbReference type="InterPro" id="IPR017463">
    <property type="entry name" value="Sulphur_relay_TusD/DsrE"/>
</dbReference>
<dbReference type="NCBIfam" id="NF001237">
    <property type="entry name" value="PRK00207.1"/>
    <property type="match status" value="1"/>
</dbReference>
<dbReference type="NCBIfam" id="TIGR03012">
    <property type="entry name" value="sulf_tusD_dsrE"/>
    <property type="match status" value="1"/>
</dbReference>
<dbReference type="PANTHER" id="PTHR34874">
    <property type="entry name" value="PROTEIN YCHN"/>
    <property type="match status" value="1"/>
</dbReference>
<dbReference type="PANTHER" id="PTHR34874:SF3">
    <property type="entry name" value="SULFURTRANSFERASE TUSD"/>
    <property type="match status" value="1"/>
</dbReference>
<dbReference type="Pfam" id="PF02635">
    <property type="entry name" value="DsrE"/>
    <property type="match status" value="1"/>
</dbReference>
<dbReference type="SUPFAM" id="SSF75169">
    <property type="entry name" value="DsrEFH-like"/>
    <property type="match status" value="1"/>
</dbReference>
<reference key="1">
    <citation type="submission" date="2008-04" db="EMBL/GenBank/DDBJ databases">
        <title>Complete sequence of Yersinia pseudotuberculosis PB1/+.</title>
        <authorList>
            <person name="Copeland A."/>
            <person name="Lucas S."/>
            <person name="Lapidus A."/>
            <person name="Glavina del Rio T."/>
            <person name="Dalin E."/>
            <person name="Tice H."/>
            <person name="Bruce D."/>
            <person name="Goodwin L."/>
            <person name="Pitluck S."/>
            <person name="Munk A.C."/>
            <person name="Brettin T."/>
            <person name="Detter J.C."/>
            <person name="Han C."/>
            <person name="Tapia R."/>
            <person name="Schmutz J."/>
            <person name="Larimer F."/>
            <person name="Land M."/>
            <person name="Hauser L."/>
            <person name="Challacombe J.F."/>
            <person name="Green L."/>
            <person name="Lindler L.E."/>
            <person name="Nikolich M.P."/>
            <person name="Richardson P."/>
        </authorList>
    </citation>
    <scope>NUCLEOTIDE SEQUENCE [LARGE SCALE GENOMIC DNA]</scope>
    <source>
        <strain>PB1/+</strain>
    </source>
</reference>
<proteinExistence type="inferred from homology"/>
<gene>
    <name evidence="1" type="primary">tusD</name>
    <name type="ordered locus">YPTS_3900</name>
</gene>
<evidence type="ECO:0000255" key="1">
    <source>
        <dbReference type="HAMAP-Rule" id="MF_00390"/>
    </source>
</evidence>
<organism>
    <name type="scientific">Yersinia pseudotuberculosis serotype IB (strain PB1/+)</name>
    <dbReference type="NCBI Taxonomy" id="502801"/>
    <lineage>
        <taxon>Bacteria</taxon>
        <taxon>Pseudomonadati</taxon>
        <taxon>Pseudomonadota</taxon>
        <taxon>Gammaproteobacteria</taxon>
        <taxon>Enterobacterales</taxon>
        <taxon>Yersiniaceae</taxon>
        <taxon>Yersinia</taxon>
    </lineage>
</organism>
<feature type="chain" id="PRO_1000122877" description="Sulfurtransferase TusD">
    <location>
        <begin position="1"/>
        <end position="131"/>
    </location>
</feature>
<feature type="active site" description="Cysteine persulfide intermediate" evidence="1">
    <location>
        <position position="81"/>
    </location>
</feature>